<reference key="1">
    <citation type="journal article" date="2009" name="J. Bacteriol.">
        <title>Genome sequence of Azotobacter vinelandii, an obligate aerobe specialized to support diverse anaerobic metabolic processes.</title>
        <authorList>
            <person name="Setubal J.C."/>
            <person name="Dos Santos P."/>
            <person name="Goldman B.S."/>
            <person name="Ertesvaag H."/>
            <person name="Espin G."/>
            <person name="Rubio L.M."/>
            <person name="Valla S."/>
            <person name="Almeida N.F."/>
            <person name="Balasubramanian D."/>
            <person name="Cromes L."/>
            <person name="Curatti L."/>
            <person name="Du Z."/>
            <person name="Godsy E."/>
            <person name="Goodner B."/>
            <person name="Hellner-Burris K."/>
            <person name="Hernandez J.A."/>
            <person name="Houmiel K."/>
            <person name="Imperial J."/>
            <person name="Kennedy C."/>
            <person name="Larson T.J."/>
            <person name="Latreille P."/>
            <person name="Ligon L.S."/>
            <person name="Lu J."/>
            <person name="Maerk M."/>
            <person name="Miller N.M."/>
            <person name="Norton S."/>
            <person name="O'Carroll I.P."/>
            <person name="Paulsen I."/>
            <person name="Raulfs E.C."/>
            <person name="Roemer R."/>
            <person name="Rosser J."/>
            <person name="Segura D."/>
            <person name="Slater S."/>
            <person name="Stricklin S.L."/>
            <person name="Studholme D.J."/>
            <person name="Sun J."/>
            <person name="Viana C.J."/>
            <person name="Wallin E."/>
            <person name="Wang B."/>
            <person name="Wheeler C."/>
            <person name="Zhu H."/>
            <person name="Dean D.R."/>
            <person name="Dixon R."/>
            <person name="Wood D."/>
        </authorList>
    </citation>
    <scope>NUCLEOTIDE SEQUENCE [LARGE SCALE GENOMIC DNA]</scope>
    <source>
        <strain>DJ / ATCC BAA-1303</strain>
    </source>
</reference>
<comment type="function">
    <text evidence="1">Catalyzes the conversion of 4-hydroxy-tetrahydrodipicolinate (HTPA) to tetrahydrodipicolinate.</text>
</comment>
<comment type="catalytic activity">
    <reaction evidence="1">
        <text>(S)-2,3,4,5-tetrahydrodipicolinate + NAD(+) + H2O = (2S,4S)-4-hydroxy-2,3,4,5-tetrahydrodipicolinate + NADH + H(+)</text>
        <dbReference type="Rhea" id="RHEA:35323"/>
        <dbReference type="ChEBI" id="CHEBI:15377"/>
        <dbReference type="ChEBI" id="CHEBI:15378"/>
        <dbReference type="ChEBI" id="CHEBI:16845"/>
        <dbReference type="ChEBI" id="CHEBI:57540"/>
        <dbReference type="ChEBI" id="CHEBI:57945"/>
        <dbReference type="ChEBI" id="CHEBI:67139"/>
        <dbReference type="EC" id="1.17.1.8"/>
    </reaction>
</comment>
<comment type="catalytic activity">
    <reaction evidence="1">
        <text>(S)-2,3,4,5-tetrahydrodipicolinate + NADP(+) + H2O = (2S,4S)-4-hydroxy-2,3,4,5-tetrahydrodipicolinate + NADPH + H(+)</text>
        <dbReference type="Rhea" id="RHEA:35331"/>
        <dbReference type="ChEBI" id="CHEBI:15377"/>
        <dbReference type="ChEBI" id="CHEBI:15378"/>
        <dbReference type="ChEBI" id="CHEBI:16845"/>
        <dbReference type="ChEBI" id="CHEBI:57783"/>
        <dbReference type="ChEBI" id="CHEBI:58349"/>
        <dbReference type="ChEBI" id="CHEBI:67139"/>
        <dbReference type="EC" id="1.17.1.8"/>
    </reaction>
</comment>
<comment type="pathway">
    <text evidence="1">Amino-acid biosynthesis; L-lysine biosynthesis via DAP pathway; (S)-tetrahydrodipicolinate from L-aspartate: step 4/4.</text>
</comment>
<comment type="subcellular location">
    <subcellularLocation>
        <location evidence="1">Cytoplasm</location>
    </subcellularLocation>
</comment>
<comment type="similarity">
    <text evidence="1">Belongs to the DapB family.</text>
</comment>
<comment type="caution">
    <text evidence="2">Was originally thought to be a dihydrodipicolinate reductase (DHDPR), catalyzing the conversion of dihydrodipicolinate to tetrahydrodipicolinate. However, it was shown in E.coli that the substrate of the enzymatic reaction is not dihydrodipicolinate (DHDP) but in fact (2S,4S)-4-hydroxy-2,3,4,5-tetrahydrodipicolinic acid (HTPA), the product released by the DapA-catalyzed reaction.</text>
</comment>
<evidence type="ECO:0000255" key="1">
    <source>
        <dbReference type="HAMAP-Rule" id="MF_00102"/>
    </source>
</evidence>
<evidence type="ECO:0000305" key="2"/>
<feature type="chain" id="PRO_1000202807" description="4-hydroxy-tetrahydrodipicolinate reductase">
    <location>
        <begin position="1"/>
        <end position="267"/>
    </location>
</feature>
<feature type="active site" description="Proton donor/acceptor" evidence="1">
    <location>
        <position position="155"/>
    </location>
</feature>
<feature type="active site" description="Proton donor" evidence="1">
    <location>
        <position position="159"/>
    </location>
</feature>
<feature type="binding site" evidence="1">
    <location>
        <begin position="8"/>
        <end position="13"/>
    </location>
    <ligand>
        <name>NAD(+)</name>
        <dbReference type="ChEBI" id="CHEBI:57540"/>
    </ligand>
</feature>
<feature type="binding site" evidence="1">
    <location>
        <position position="35"/>
    </location>
    <ligand>
        <name>NADP(+)</name>
        <dbReference type="ChEBI" id="CHEBI:58349"/>
    </ligand>
</feature>
<feature type="binding site" evidence="1">
    <location>
        <begin position="98"/>
        <end position="100"/>
    </location>
    <ligand>
        <name>NAD(+)</name>
        <dbReference type="ChEBI" id="CHEBI:57540"/>
    </ligand>
</feature>
<feature type="binding site" evidence="1">
    <location>
        <begin position="122"/>
        <end position="125"/>
    </location>
    <ligand>
        <name>NAD(+)</name>
        <dbReference type="ChEBI" id="CHEBI:57540"/>
    </ligand>
</feature>
<feature type="binding site" evidence="1">
    <location>
        <position position="156"/>
    </location>
    <ligand>
        <name>(S)-2,3,4,5-tetrahydrodipicolinate</name>
        <dbReference type="ChEBI" id="CHEBI:16845"/>
    </ligand>
</feature>
<feature type="binding site" evidence="1">
    <location>
        <begin position="165"/>
        <end position="166"/>
    </location>
    <ligand>
        <name>(S)-2,3,4,5-tetrahydrodipicolinate</name>
        <dbReference type="ChEBI" id="CHEBI:16845"/>
    </ligand>
</feature>
<organism>
    <name type="scientific">Azotobacter vinelandii (strain DJ / ATCC BAA-1303)</name>
    <dbReference type="NCBI Taxonomy" id="322710"/>
    <lineage>
        <taxon>Bacteria</taxon>
        <taxon>Pseudomonadati</taxon>
        <taxon>Pseudomonadota</taxon>
        <taxon>Gammaproteobacteria</taxon>
        <taxon>Pseudomonadales</taxon>
        <taxon>Pseudomonadaceae</taxon>
        <taxon>Azotobacter</taxon>
    </lineage>
</organism>
<gene>
    <name evidence="1" type="primary">dapB</name>
    <name type="ordered locus">Avin_42950</name>
</gene>
<protein>
    <recommendedName>
        <fullName evidence="1">4-hydroxy-tetrahydrodipicolinate reductase</fullName>
        <shortName evidence="1">HTPA reductase</shortName>
        <ecNumber evidence="1">1.17.1.8</ecNumber>
    </recommendedName>
</protein>
<sequence length="267" mass="28297">MRRIAVMGAAGRMGKALIEAARQAPGAGLTAAIGRPDSTLVGVDAGELAGQGRIGVSLSGELATVLDRFDVLIDFTHPTVTLKNLDICRRAGKAMVIGTTGFSADERRMLDEAAREIPIVFAANFSVGVNLCLKLLDTAARVLGDEVDIEIVEAHHRHKVDAPSGTALRMGEVVASALGRDLQKVAVYGREGQTGARTRETIGFATVRAGDIVGDHTVLFAAEGERVEITHKASSRMTFAKGAVRAALWLEGRDPALYDMQDVLGLR</sequence>
<dbReference type="EC" id="1.17.1.8" evidence="1"/>
<dbReference type="EMBL" id="CP001157">
    <property type="protein sequence ID" value="ACO80417.1"/>
    <property type="molecule type" value="Genomic_DNA"/>
</dbReference>
<dbReference type="RefSeq" id="WP_012702785.1">
    <property type="nucleotide sequence ID" value="NC_012560.1"/>
</dbReference>
<dbReference type="SMR" id="C1DFM1"/>
<dbReference type="STRING" id="322710.Avin_42950"/>
<dbReference type="EnsemblBacteria" id="ACO80417">
    <property type="protein sequence ID" value="ACO80417"/>
    <property type="gene ID" value="Avin_42950"/>
</dbReference>
<dbReference type="GeneID" id="88187210"/>
<dbReference type="KEGG" id="avn:Avin_42950"/>
<dbReference type="eggNOG" id="COG0289">
    <property type="taxonomic scope" value="Bacteria"/>
</dbReference>
<dbReference type="HOGENOM" id="CLU_047479_2_1_6"/>
<dbReference type="OrthoDB" id="9790352at2"/>
<dbReference type="UniPathway" id="UPA00034">
    <property type="reaction ID" value="UER00018"/>
</dbReference>
<dbReference type="Proteomes" id="UP000002424">
    <property type="component" value="Chromosome"/>
</dbReference>
<dbReference type="GO" id="GO:0005829">
    <property type="term" value="C:cytosol"/>
    <property type="evidence" value="ECO:0007669"/>
    <property type="project" value="TreeGrafter"/>
</dbReference>
<dbReference type="GO" id="GO:0008839">
    <property type="term" value="F:4-hydroxy-tetrahydrodipicolinate reductase"/>
    <property type="evidence" value="ECO:0007669"/>
    <property type="project" value="UniProtKB-EC"/>
</dbReference>
<dbReference type="GO" id="GO:0051287">
    <property type="term" value="F:NAD binding"/>
    <property type="evidence" value="ECO:0007669"/>
    <property type="project" value="UniProtKB-UniRule"/>
</dbReference>
<dbReference type="GO" id="GO:0050661">
    <property type="term" value="F:NADP binding"/>
    <property type="evidence" value="ECO:0007669"/>
    <property type="project" value="UniProtKB-UniRule"/>
</dbReference>
<dbReference type="GO" id="GO:0016726">
    <property type="term" value="F:oxidoreductase activity, acting on CH or CH2 groups, NAD or NADP as acceptor"/>
    <property type="evidence" value="ECO:0007669"/>
    <property type="project" value="UniProtKB-UniRule"/>
</dbReference>
<dbReference type="GO" id="GO:0019877">
    <property type="term" value="P:diaminopimelate biosynthetic process"/>
    <property type="evidence" value="ECO:0007669"/>
    <property type="project" value="UniProtKB-UniRule"/>
</dbReference>
<dbReference type="GO" id="GO:0009089">
    <property type="term" value="P:lysine biosynthetic process via diaminopimelate"/>
    <property type="evidence" value="ECO:0007669"/>
    <property type="project" value="UniProtKB-UniRule"/>
</dbReference>
<dbReference type="CDD" id="cd02274">
    <property type="entry name" value="DHDPR_N"/>
    <property type="match status" value="1"/>
</dbReference>
<dbReference type="FunFam" id="3.30.360.10:FF:000004">
    <property type="entry name" value="4-hydroxy-tetrahydrodipicolinate reductase"/>
    <property type="match status" value="1"/>
</dbReference>
<dbReference type="FunFam" id="3.40.50.720:FF:000048">
    <property type="entry name" value="4-hydroxy-tetrahydrodipicolinate reductase"/>
    <property type="match status" value="1"/>
</dbReference>
<dbReference type="Gene3D" id="3.30.360.10">
    <property type="entry name" value="Dihydrodipicolinate Reductase, domain 2"/>
    <property type="match status" value="1"/>
</dbReference>
<dbReference type="Gene3D" id="3.40.50.720">
    <property type="entry name" value="NAD(P)-binding Rossmann-like Domain"/>
    <property type="match status" value="1"/>
</dbReference>
<dbReference type="HAMAP" id="MF_00102">
    <property type="entry name" value="DapB"/>
    <property type="match status" value="1"/>
</dbReference>
<dbReference type="InterPro" id="IPR022663">
    <property type="entry name" value="DapB_C"/>
</dbReference>
<dbReference type="InterPro" id="IPR000846">
    <property type="entry name" value="DapB_N"/>
</dbReference>
<dbReference type="InterPro" id="IPR022664">
    <property type="entry name" value="DapB_N_CS"/>
</dbReference>
<dbReference type="InterPro" id="IPR023940">
    <property type="entry name" value="DHDPR_bac"/>
</dbReference>
<dbReference type="InterPro" id="IPR036291">
    <property type="entry name" value="NAD(P)-bd_dom_sf"/>
</dbReference>
<dbReference type="NCBIfam" id="TIGR00036">
    <property type="entry name" value="dapB"/>
    <property type="match status" value="1"/>
</dbReference>
<dbReference type="PANTHER" id="PTHR20836:SF0">
    <property type="entry name" value="4-HYDROXY-TETRAHYDRODIPICOLINATE REDUCTASE 1, CHLOROPLASTIC-RELATED"/>
    <property type="match status" value="1"/>
</dbReference>
<dbReference type="PANTHER" id="PTHR20836">
    <property type="entry name" value="DIHYDRODIPICOLINATE REDUCTASE"/>
    <property type="match status" value="1"/>
</dbReference>
<dbReference type="Pfam" id="PF05173">
    <property type="entry name" value="DapB_C"/>
    <property type="match status" value="1"/>
</dbReference>
<dbReference type="Pfam" id="PF01113">
    <property type="entry name" value="DapB_N"/>
    <property type="match status" value="1"/>
</dbReference>
<dbReference type="PIRSF" id="PIRSF000161">
    <property type="entry name" value="DHPR"/>
    <property type="match status" value="1"/>
</dbReference>
<dbReference type="SUPFAM" id="SSF55347">
    <property type="entry name" value="Glyceraldehyde-3-phosphate dehydrogenase-like, C-terminal domain"/>
    <property type="match status" value="1"/>
</dbReference>
<dbReference type="SUPFAM" id="SSF51735">
    <property type="entry name" value="NAD(P)-binding Rossmann-fold domains"/>
    <property type="match status" value="1"/>
</dbReference>
<dbReference type="PROSITE" id="PS01298">
    <property type="entry name" value="DAPB"/>
    <property type="match status" value="1"/>
</dbReference>
<keyword id="KW-0028">Amino-acid biosynthesis</keyword>
<keyword id="KW-0963">Cytoplasm</keyword>
<keyword id="KW-0220">Diaminopimelate biosynthesis</keyword>
<keyword id="KW-0457">Lysine biosynthesis</keyword>
<keyword id="KW-0520">NAD</keyword>
<keyword id="KW-0521">NADP</keyword>
<keyword id="KW-0560">Oxidoreductase</keyword>
<accession>C1DFM1</accession>
<proteinExistence type="inferred from homology"/>
<name>DAPB_AZOVD</name>